<keyword id="KW-0167">Capsid protein</keyword>
<keyword id="KW-1031">Host cell junction</keyword>
<keyword id="KW-0813">Transport</keyword>
<keyword id="KW-0916">Viral movement protein</keyword>
<keyword id="KW-0946">Virion</keyword>
<evidence type="ECO:0000250" key="1"/>
<evidence type="ECO:0000256" key="2">
    <source>
        <dbReference type="SAM" id="MobiDB-lite"/>
    </source>
</evidence>
<evidence type="ECO:0000305" key="3"/>
<dbReference type="EMBL" id="X81814">
    <property type="protein sequence ID" value="CAA57412.1"/>
    <property type="molecule type" value="Genomic_RNA"/>
</dbReference>
<dbReference type="SMR" id="Q65030"/>
<dbReference type="GO" id="GO:0044219">
    <property type="term" value="C:host cell plasmodesma"/>
    <property type="evidence" value="ECO:0007669"/>
    <property type="project" value="UniProtKB-SubCell"/>
</dbReference>
<dbReference type="GO" id="GO:0019028">
    <property type="term" value="C:viral capsid"/>
    <property type="evidence" value="ECO:0007669"/>
    <property type="project" value="UniProtKB-KW"/>
</dbReference>
<dbReference type="GO" id="GO:0005198">
    <property type="term" value="F:structural molecule activity"/>
    <property type="evidence" value="ECO:0007669"/>
    <property type="project" value="InterPro"/>
</dbReference>
<dbReference type="GO" id="GO:0046740">
    <property type="term" value="P:transport of virus in host, cell to cell"/>
    <property type="evidence" value="ECO:0007669"/>
    <property type="project" value="UniProtKB-KW"/>
</dbReference>
<dbReference type="Gene3D" id="2.60.120.20">
    <property type="match status" value="2"/>
</dbReference>
<dbReference type="InterPro" id="IPR005054">
    <property type="entry name" value="Nepo_coat"/>
</dbReference>
<dbReference type="InterPro" id="IPR005305">
    <property type="entry name" value="Nepo_coat_C"/>
</dbReference>
<dbReference type="InterPro" id="IPR005306">
    <property type="entry name" value="Nepo_coat_N"/>
</dbReference>
<dbReference type="InterPro" id="IPR021081">
    <property type="entry name" value="Nepovirus_subgr_A_2A"/>
</dbReference>
<dbReference type="InterPro" id="IPR029053">
    <property type="entry name" value="Viral_coat"/>
</dbReference>
<dbReference type="Pfam" id="PF12312">
    <property type="entry name" value="NeA_P2"/>
    <property type="match status" value="1"/>
</dbReference>
<dbReference type="Pfam" id="PF03391">
    <property type="entry name" value="Nepo_coat"/>
    <property type="match status" value="1"/>
</dbReference>
<dbReference type="Pfam" id="PF03688">
    <property type="entry name" value="Nepo_coat_C"/>
    <property type="match status" value="1"/>
</dbReference>
<dbReference type="Pfam" id="PF03689">
    <property type="entry name" value="Nepo_coat_N"/>
    <property type="match status" value="1"/>
</dbReference>
<dbReference type="SUPFAM" id="SSF88633">
    <property type="entry name" value="Positive stranded ssRNA viruses"/>
    <property type="match status" value="3"/>
</dbReference>
<accession>Q65030</accession>
<sequence>MGKFYYSNRRLACYAQATNRHLGGSFEQWLQCMEDSAFRAEVKARVQSEREEVRVRRLFSYPVGSGPAEDPRGVNWAYICLGTTAHWAGVPGDMVPPPEPVKAQEVVVQRSVGEDGRTGYRRQCLNIPNPPPMPKPYSRPIGAFAPTRSGFIRATVKRLTREREESRAAALFAELPLEYPQGAPLVVPRGFAAMRWTYHATWSRWYDTSDERALRTHPGGPALPPLPPPPPIQKPPSFEERLQAALHRQSCARAFALETSLGLNMAWVGMATIPSTSVCCADGRTTGGQTIAQEADPLTHRVSSNTAPGRAQWISERRSALRRREQANSLQGLAAQTDMTFEQARNAYLGAADMIEQGLPLLPPLRNAYAPRGLWRGPSTRANYTLDFRLNGIPTGENTLEILYNPVSDEEMEDYRDRGMSAVVIDALEIAINPFGMPGNPTDLTVVATYGHERNMERAFIGSSSTFLGNGLARAIFFPGLQYSQEEPRRESLIRLYVASTNATVDADSVLAAISVGTLRQHIGSLHSRTVASSVHAAQVQGTTLRATMMGNSVVVSPEGGLVSGVPEANVQIGGGSSMRMVGPLAWENVEEPGQTFSIRSRSRSVRVDRNADVGIAHPRMSTTTRGLAGRGTVPVPKDCQAGKYLKTLDLRDMVSGFSGIQYEKWITAGLVMPDFKVVIRYPANAFTGITWVMSFDAYNRITSSISTTASPAYTLSVPHWLLHHKNGTTSCDIDYGELCGHAMWFSATTFESPKLHFTCLTGNNKELAADWEFVVELYAEFEAAKSFLGKPNFIYSADAFNGSLKFLTIPPLEYDLSATSAYKSVSLLLGQTLVDGTHKVYNFNNTLLSYYLGIGGIVKGKVHVCSPCTYGIVLRVVSEWNGVTNNWNQLFKYPGCYIEEDGSFAIEIRSPYHRTPLRLIDAQSASSFTSTLNFYAISGPIAPSGETAKMPVVVQIEEIALPDLSVPSFPNDYFLWVDFSSFTVDVEEYVIGSRFFDISSTTSTVALGDNPFSHMIACHGLHHGILDLKLMWDLEGEFGKSSGGVTITKLCGDKATGMDGASRVCALQNMGCETELYIGNYAGANPNTALSLYSRWLAIKLDKAKSMKMLRILCKPRGNFEFYGRTCFKV</sequence>
<name>POL2_ARMVS</name>
<proteinExistence type="inferred from homology"/>
<comment type="function">
    <molecule>Protein 2A</molecule>
    <text evidence="1">Implicated in RNA2 replication. Could also be required for nematode transmission of the virus (By similarity).</text>
</comment>
<comment type="function">
    <molecule>Movement protein</molecule>
    <text evidence="1">Transports viral genome to neighboring plant cells directly through plasmosdesmata, without any budding. The movement protein allows efficient cell to cell propagation, by bypassing the host cell wall barrier. Acts by forming a tubular structure at the host plasmodesmata, enlarging it enough to allow free passage of virion capsids (By similarity).</text>
</comment>
<comment type="subcellular location">
    <molecule>Movement protein</molecule>
    <subcellularLocation>
        <location evidence="1">Host cell junction</location>
        <location evidence="1">Host plasmodesma</location>
    </subcellularLocation>
    <text evidence="1">Assembles in tubules that are embedded within modified plasmodesmata.</text>
</comment>
<comment type="subcellular location">
    <molecule>Coat protein</molecule>
    <subcellularLocation>
        <location evidence="3">Virion</location>
    </subcellularLocation>
</comment>
<comment type="PTM">
    <text evidence="1">Specific enzymatic cleavages in vivo by the P1 encoded 3C-like protease yield mature proteins.</text>
</comment>
<comment type="miscellaneous">
    <text>Virions are comprised of 60 copies of the coat protein.</text>
</comment>
<comment type="similarity">
    <text evidence="3">Belongs to the nepoviruses RNA2 polyprotein family.</text>
</comment>
<protein>
    <recommendedName>
        <fullName>RNA2 polyprotein</fullName>
    </recommendedName>
    <alternativeName>
        <fullName>P2</fullName>
    </alternativeName>
    <component>
        <recommendedName>
            <fullName>Protein 2A</fullName>
            <shortName>P2A</shortName>
        </recommendedName>
    </component>
    <component>
        <recommendedName>
            <fullName>Movement protein</fullName>
        </recommendedName>
        <alternativeName>
            <fullName>2B-MP</fullName>
        </alternativeName>
    </component>
    <component>
        <recommendedName>
            <fullName>Coat protein</fullName>
        </recommendedName>
        <alternativeName>
            <fullName>2C-CP</fullName>
        </alternativeName>
    </component>
</protein>
<reference key="1">
    <citation type="journal article" date="1995" name="J. Gen. Virol.">
        <title>The 119 kDa and 124 kDa polyproteins of arabis mosaic nepovirus (isolate S) are encoded by two distinct RNA2 species.</title>
        <authorList>
            <person name="Loudes A.-M."/>
            <person name="Ritzenthaler C."/>
            <person name="Pinck M."/>
            <person name="Serghini M.A."/>
            <person name="Pinck L."/>
        </authorList>
    </citation>
    <scope>NUCLEOTIDE SEQUENCE [GENOMIC RNA]</scope>
</reference>
<feature type="chain" id="PRO_0000037097" description="Protein 2A" evidence="1">
    <location>
        <begin position="1"/>
        <end position="277"/>
    </location>
</feature>
<feature type="chain" id="PRO_0000037098" description="Movement protein" evidence="1">
    <location>
        <begin position="278"/>
        <end position="626"/>
    </location>
</feature>
<feature type="chain" id="PRO_0000037099" description="Coat protein" evidence="1">
    <location>
        <begin position="627"/>
        <end position="1131"/>
    </location>
</feature>
<feature type="region of interest" description="Disordered" evidence="2">
    <location>
        <begin position="213"/>
        <end position="236"/>
    </location>
</feature>
<feature type="compositionally biased region" description="Pro residues" evidence="2">
    <location>
        <begin position="221"/>
        <end position="234"/>
    </location>
</feature>
<organismHost>
    <name type="scientific">Vitis vinifera</name>
    <name type="common">Grape</name>
    <dbReference type="NCBI Taxonomy" id="29760"/>
</organismHost>
<organism>
    <name type="scientific">Arabis mosaic virus (isolate Syrah)</name>
    <name type="common">ArMV</name>
    <dbReference type="NCBI Taxonomy" id="283676"/>
    <lineage>
        <taxon>Viruses</taxon>
        <taxon>Riboviria</taxon>
        <taxon>Orthornavirae</taxon>
        <taxon>Pisuviricota</taxon>
        <taxon>Pisoniviricetes</taxon>
        <taxon>Picornavirales</taxon>
        <taxon>Secoviridae</taxon>
        <taxon>Comovirinae</taxon>
        <taxon>Nepovirus</taxon>
        <taxon>Nepovirus arabis</taxon>
    </lineage>
</organism>